<keyword id="KW-0012">Acyltransferase</keyword>
<keyword id="KW-0444">Lipid biosynthesis</keyword>
<keyword id="KW-0443">Lipid metabolism</keyword>
<keyword id="KW-0472">Membrane</keyword>
<keyword id="KW-1185">Reference proteome</keyword>
<keyword id="KW-0808">Transferase</keyword>
<keyword id="KW-0812">Transmembrane</keyword>
<keyword id="KW-1133">Transmembrane helix</keyword>
<gene>
    <name type="ordered locus">At5g51420</name>
    <name type="ORF">MFG13.13</name>
</gene>
<sequence length="435" mass="51287">MEEELKNLIKVSVSVIISISYCYYVPTRIKPGIFRFLSVLPICALFRVLPLFFASVHLSGYTALFISWLANFKLILFSFNQGPLFPLPSNLTRFICFACFPIKLQQNPKRRDYFFQWEYPIEVLFSNQFVTKVVILSVVLHMYNHIQHIYPIVLFVLYPLHLYLVLEILLKLFNAFFSIALDCELEPQLNEPYLAYSLRDFWGHWWTLMLPTILLPDVYARMRRITEGKMNSENALYLGVFVTFLVSGALHEFLFFYITRERPTGEVTLFFVLHGVCIVAYDARLKKKIARWIGFEFCPCLILQVMVMGFVVVTAGWLFFPPLVRTGKIQRFANEALLFIGFVRNLFNESLFFMRKFFNEALFFTGFVMRKLFNGALFFIGFVKLKLFNESSLFFIMRKLFNEAMFFIGFVIRKLFNEAMFFIGFVKLKLFTFGW</sequence>
<reference key="1">
    <citation type="submission" date="1999-04" db="EMBL/GenBank/DDBJ databases">
        <title>Structural analysis of Arabidopsis thaliana chromosome 5. XI.</title>
        <authorList>
            <person name="Kaneko T."/>
            <person name="Katoh T."/>
            <person name="Asamizu E."/>
            <person name="Sato S."/>
            <person name="Nakamura Y."/>
            <person name="Kotani H."/>
            <person name="Tabata S."/>
        </authorList>
    </citation>
    <scope>NUCLEOTIDE SEQUENCE [LARGE SCALE GENOMIC DNA]</scope>
    <source>
        <strain>cv. Columbia</strain>
    </source>
</reference>
<reference key="2">
    <citation type="journal article" date="2017" name="Plant J.">
        <title>Araport11: a complete reannotation of the Arabidopsis thaliana reference genome.</title>
        <authorList>
            <person name="Cheng C.Y."/>
            <person name="Krishnakumar V."/>
            <person name="Chan A.P."/>
            <person name="Thibaud-Nissen F."/>
            <person name="Schobel S."/>
            <person name="Town C.D."/>
        </authorList>
    </citation>
    <scope>GENOME REANNOTATION</scope>
    <source>
        <strain>cv. Columbia</strain>
    </source>
</reference>
<reference key="3">
    <citation type="submission" date="2005-05" db="EMBL/GenBank/DDBJ databases">
        <authorList>
            <person name="Underwood B.A."/>
            <person name="Xiao Y.-L."/>
            <person name="Moskal W.A. Jr."/>
            <person name="Monaghan E.L."/>
            <person name="Wang W."/>
            <person name="Redman J.C."/>
            <person name="Wu H.C."/>
            <person name="Utterback T."/>
            <person name="Town C.D."/>
        </authorList>
    </citation>
    <scope>NUCLEOTIDE SEQUENCE [LARGE SCALE MRNA]</scope>
    <source>
        <strain>cv. Columbia</strain>
    </source>
</reference>
<comment type="function">
    <text evidence="1">Catalyzes the final step in the synthesis of long-chain linear esters (waxes).</text>
</comment>
<comment type="catalytic activity">
    <reaction>
        <text>a long chain fatty alcohol + a fatty acyl-CoA = a wax ester + CoA</text>
        <dbReference type="Rhea" id="RHEA:38443"/>
        <dbReference type="ChEBI" id="CHEBI:10036"/>
        <dbReference type="ChEBI" id="CHEBI:17135"/>
        <dbReference type="ChEBI" id="CHEBI:57287"/>
        <dbReference type="ChEBI" id="CHEBI:77636"/>
        <dbReference type="EC" id="2.3.1.75"/>
    </reaction>
</comment>
<comment type="subcellular location">
    <subcellularLocation>
        <location evidence="3">Membrane</location>
        <topology evidence="3">Multi-pass membrane protein</topology>
    </subcellularLocation>
</comment>
<comment type="similarity">
    <text evidence="3">Belongs to the wax synthase family.</text>
</comment>
<proteinExistence type="evidence at transcript level"/>
<protein>
    <recommendedName>
        <fullName>Probable long-chain-alcohol O-fatty-acyltransferase 11</fullName>
        <ecNumber>2.3.1.75</ecNumber>
    </recommendedName>
    <alternativeName>
        <fullName>Wax synthase 11</fullName>
    </alternativeName>
</protein>
<evidence type="ECO:0000250" key="1"/>
<evidence type="ECO:0000255" key="2"/>
<evidence type="ECO:0000305" key="3"/>
<accession>Q9FGN1</accession>
<organism>
    <name type="scientific">Arabidopsis thaliana</name>
    <name type="common">Mouse-ear cress</name>
    <dbReference type="NCBI Taxonomy" id="3702"/>
    <lineage>
        <taxon>Eukaryota</taxon>
        <taxon>Viridiplantae</taxon>
        <taxon>Streptophyta</taxon>
        <taxon>Embryophyta</taxon>
        <taxon>Tracheophyta</taxon>
        <taxon>Spermatophyta</taxon>
        <taxon>Magnoliopsida</taxon>
        <taxon>eudicotyledons</taxon>
        <taxon>Gunneridae</taxon>
        <taxon>Pentapetalae</taxon>
        <taxon>rosids</taxon>
        <taxon>malvids</taxon>
        <taxon>Brassicales</taxon>
        <taxon>Brassicaceae</taxon>
        <taxon>Camelineae</taxon>
        <taxon>Arabidopsis</taxon>
    </lineage>
</organism>
<dbReference type="EC" id="2.3.1.75"/>
<dbReference type="EMBL" id="AB025621">
    <property type="protein sequence ID" value="BAB09753.1"/>
    <property type="molecule type" value="Genomic_DNA"/>
</dbReference>
<dbReference type="EMBL" id="CP002688">
    <property type="protein sequence ID" value="AED96079.1"/>
    <property type="molecule type" value="Genomic_DNA"/>
</dbReference>
<dbReference type="EMBL" id="DQ056715">
    <property type="protein sequence ID" value="AAY78861.1"/>
    <property type="molecule type" value="mRNA"/>
</dbReference>
<dbReference type="RefSeq" id="NP_199955.1">
    <property type="nucleotide sequence ID" value="NM_124521.2"/>
</dbReference>
<dbReference type="STRING" id="3702.Q9FGN1"/>
<dbReference type="PaxDb" id="3702-AT5G51420.1"/>
<dbReference type="EnsemblPlants" id="AT5G51420.1">
    <property type="protein sequence ID" value="AT5G51420.1"/>
    <property type="gene ID" value="AT5G51420"/>
</dbReference>
<dbReference type="GeneID" id="835216"/>
<dbReference type="Gramene" id="AT5G51420.1">
    <property type="protein sequence ID" value="AT5G51420.1"/>
    <property type="gene ID" value="AT5G51420"/>
</dbReference>
<dbReference type="KEGG" id="ath:AT5G51420"/>
<dbReference type="Araport" id="AT5G51420"/>
<dbReference type="TAIR" id="AT5G51420"/>
<dbReference type="HOGENOM" id="CLU_045902_0_0_1"/>
<dbReference type="InParanoid" id="Q9FGN1"/>
<dbReference type="OMA" id="HIYLAVE"/>
<dbReference type="PhylomeDB" id="Q9FGN1"/>
<dbReference type="BioCyc" id="ARA:AT5G51420-MONOMER"/>
<dbReference type="BRENDA" id="2.3.1.75">
    <property type="organism ID" value="399"/>
</dbReference>
<dbReference type="PRO" id="PR:Q9FGN1"/>
<dbReference type="Proteomes" id="UP000006548">
    <property type="component" value="Chromosome 5"/>
</dbReference>
<dbReference type="ExpressionAtlas" id="Q9FGN1">
    <property type="expression patterns" value="baseline and differential"/>
</dbReference>
<dbReference type="GO" id="GO:0016020">
    <property type="term" value="C:membrane"/>
    <property type="evidence" value="ECO:0007669"/>
    <property type="project" value="UniProtKB-SubCell"/>
</dbReference>
<dbReference type="GO" id="GO:0047196">
    <property type="term" value="F:long-chain-alcohol O-fatty-acyltransferase activity"/>
    <property type="evidence" value="ECO:0007669"/>
    <property type="project" value="UniProtKB-EC"/>
</dbReference>
<dbReference type="GO" id="GO:0006629">
    <property type="term" value="P:lipid metabolic process"/>
    <property type="evidence" value="ECO:0007669"/>
    <property type="project" value="UniProtKB-KW"/>
</dbReference>
<dbReference type="InterPro" id="IPR044851">
    <property type="entry name" value="Wax_synthase"/>
</dbReference>
<dbReference type="InterPro" id="IPR032805">
    <property type="entry name" value="Wax_synthase_dom"/>
</dbReference>
<dbReference type="PANTHER" id="PTHR31595:SF41">
    <property type="entry name" value="LONG-CHAIN-ALCOHOL O-FATTY-ACYLTRANSFERASE 10-RELATED"/>
    <property type="match status" value="1"/>
</dbReference>
<dbReference type="PANTHER" id="PTHR31595">
    <property type="entry name" value="LONG-CHAIN-ALCOHOL O-FATTY-ACYLTRANSFERASE 3-RELATED"/>
    <property type="match status" value="1"/>
</dbReference>
<dbReference type="Pfam" id="PF13813">
    <property type="entry name" value="MBOAT_2"/>
    <property type="match status" value="1"/>
</dbReference>
<feature type="chain" id="PRO_0000380687" description="Probable long-chain-alcohol O-fatty-acyltransferase 11">
    <location>
        <begin position="1"/>
        <end position="435"/>
    </location>
</feature>
<feature type="transmembrane region" description="Helical" evidence="2">
    <location>
        <begin position="7"/>
        <end position="27"/>
    </location>
</feature>
<feature type="transmembrane region" description="Helical" evidence="2">
    <location>
        <begin position="36"/>
        <end position="56"/>
    </location>
</feature>
<feature type="transmembrane region" description="Helical" evidence="2">
    <location>
        <begin position="59"/>
        <end position="79"/>
    </location>
</feature>
<feature type="transmembrane region" description="Helical" evidence="2">
    <location>
        <begin position="120"/>
        <end position="140"/>
    </location>
</feature>
<feature type="transmembrane region" description="Helical" evidence="2">
    <location>
        <begin position="149"/>
        <end position="169"/>
    </location>
</feature>
<feature type="transmembrane region" description="Helical" evidence="2">
    <location>
        <begin position="200"/>
        <end position="220"/>
    </location>
</feature>
<feature type="transmembrane region" description="Helical" evidence="2">
    <location>
        <begin position="238"/>
        <end position="258"/>
    </location>
</feature>
<feature type="transmembrane region" description="Helical" evidence="2">
    <location>
        <begin position="263"/>
        <end position="283"/>
    </location>
</feature>
<feature type="transmembrane region" description="Helical" evidence="2">
    <location>
        <begin position="300"/>
        <end position="320"/>
    </location>
</feature>
<feature type="transmembrane region" description="Helical" evidence="2">
    <location>
        <begin position="363"/>
        <end position="383"/>
    </location>
</feature>
<feature type="transmembrane region" description="Helical" evidence="2">
    <location>
        <begin position="406"/>
        <end position="426"/>
    </location>
</feature>
<name>WAXSB_ARATH</name>